<evidence type="ECO:0000255" key="1">
    <source>
        <dbReference type="HAMAP-Rule" id="MF_00176"/>
    </source>
</evidence>
<protein>
    <recommendedName>
        <fullName evidence="1">Serine--tRNA ligase</fullName>
        <ecNumber evidence="1">6.1.1.11</ecNumber>
    </recommendedName>
    <alternativeName>
        <fullName evidence="1">Seryl-tRNA synthetase</fullName>
        <shortName evidence="1">SerRS</shortName>
    </alternativeName>
    <alternativeName>
        <fullName evidence="1">Seryl-tRNA(Ser/Sec) synthetase</fullName>
    </alternativeName>
</protein>
<feature type="chain" id="PRO_1000019698" description="Serine--tRNA ligase">
    <location>
        <begin position="1"/>
        <end position="415"/>
    </location>
</feature>
<feature type="binding site" evidence="1">
    <location>
        <begin position="231"/>
        <end position="233"/>
    </location>
    <ligand>
        <name>L-serine</name>
        <dbReference type="ChEBI" id="CHEBI:33384"/>
    </ligand>
</feature>
<feature type="binding site" evidence="1">
    <location>
        <begin position="262"/>
        <end position="264"/>
    </location>
    <ligand>
        <name>ATP</name>
        <dbReference type="ChEBI" id="CHEBI:30616"/>
    </ligand>
</feature>
<feature type="binding site" evidence="1">
    <location>
        <position position="285"/>
    </location>
    <ligand>
        <name>L-serine</name>
        <dbReference type="ChEBI" id="CHEBI:33384"/>
    </ligand>
</feature>
<feature type="binding site" evidence="1">
    <location>
        <begin position="349"/>
        <end position="352"/>
    </location>
    <ligand>
        <name>ATP</name>
        <dbReference type="ChEBI" id="CHEBI:30616"/>
    </ligand>
</feature>
<feature type="binding site" evidence="1">
    <location>
        <position position="383"/>
    </location>
    <ligand>
        <name>L-serine</name>
        <dbReference type="ChEBI" id="CHEBI:33384"/>
    </ligand>
</feature>
<reference key="1">
    <citation type="journal article" date="2006" name="Proc. Natl. Acad. Sci. U.S.A.">
        <title>The complete genome sequence of a chronic atrophic gastritis Helicobacter pylori strain: evolution during disease progression.</title>
        <authorList>
            <person name="Oh J.D."/>
            <person name="Kling-Baeckhed H."/>
            <person name="Giannakis M."/>
            <person name="Xu J."/>
            <person name="Fulton R.S."/>
            <person name="Fulton L.A."/>
            <person name="Cordum H.S."/>
            <person name="Wang C."/>
            <person name="Elliott G."/>
            <person name="Edwards J."/>
            <person name="Mardis E.R."/>
            <person name="Engstrand L.G."/>
            <person name="Gordon J.I."/>
        </authorList>
    </citation>
    <scope>NUCLEOTIDE SEQUENCE [LARGE SCALE GENOMIC DNA]</scope>
    <source>
        <strain>HPAG1</strain>
    </source>
</reference>
<sequence>MIDRKLLLQDFDKVALSLKKRNHAMGDELERLREVITHYKKQLIELEGLQAFQNKVSKEFGIKMAQKVDTSDLKKELENNKIKLNELSKSVGELEQQIDLKLSIIPNLVDEKTPLGASEEDNIEIKKILTPRVFTFKPKEHFELAQQNGWIDFESGVKLAKSRFSVIRGFGAKIYRALIHLMLDFNEKNGFEIIYTPALVNEKMLFGTGQLPKFKEDVFKIENENLYLIPTAEVTLTNLYNDTIIGVENLPIKMTAHTPCFRSEAGSAGKDTRGMIRQHQFDKVELVAITHSKESDAMQEHMLESASEILKALELPHRFVQLCSADLGFSASNTIDIEVWLPGQNCYREISSVSNTRDFQARRAKIRFKENQKNQLAHTLNGSSLAVGRTMVALMENHQQEDGSIHIPKALEKYL</sequence>
<gene>
    <name evidence="1" type="primary">serS</name>
    <name type="ordered locus">HPAG1_1433</name>
</gene>
<keyword id="KW-0030">Aminoacyl-tRNA synthetase</keyword>
<keyword id="KW-0067">ATP-binding</keyword>
<keyword id="KW-0963">Cytoplasm</keyword>
<keyword id="KW-0436">Ligase</keyword>
<keyword id="KW-0547">Nucleotide-binding</keyword>
<keyword id="KW-0648">Protein biosynthesis</keyword>
<organism>
    <name type="scientific">Helicobacter pylori (strain HPAG1)</name>
    <dbReference type="NCBI Taxonomy" id="357544"/>
    <lineage>
        <taxon>Bacteria</taxon>
        <taxon>Pseudomonadati</taxon>
        <taxon>Campylobacterota</taxon>
        <taxon>Epsilonproteobacteria</taxon>
        <taxon>Campylobacterales</taxon>
        <taxon>Helicobacteraceae</taxon>
        <taxon>Helicobacter</taxon>
    </lineage>
</organism>
<comment type="function">
    <text evidence="1">Catalyzes the attachment of serine to tRNA(Ser). Is also able to aminoacylate tRNA(Sec) with serine, to form the misacylated tRNA L-seryl-tRNA(Sec), which will be further converted into selenocysteinyl-tRNA(Sec).</text>
</comment>
<comment type="catalytic activity">
    <reaction evidence="1">
        <text>tRNA(Ser) + L-serine + ATP = L-seryl-tRNA(Ser) + AMP + diphosphate + H(+)</text>
        <dbReference type="Rhea" id="RHEA:12292"/>
        <dbReference type="Rhea" id="RHEA-COMP:9669"/>
        <dbReference type="Rhea" id="RHEA-COMP:9703"/>
        <dbReference type="ChEBI" id="CHEBI:15378"/>
        <dbReference type="ChEBI" id="CHEBI:30616"/>
        <dbReference type="ChEBI" id="CHEBI:33019"/>
        <dbReference type="ChEBI" id="CHEBI:33384"/>
        <dbReference type="ChEBI" id="CHEBI:78442"/>
        <dbReference type="ChEBI" id="CHEBI:78533"/>
        <dbReference type="ChEBI" id="CHEBI:456215"/>
        <dbReference type="EC" id="6.1.1.11"/>
    </reaction>
</comment>
<comment type="catalytic activity">
    <reaction evidence="1">
        <text>tRNA(Sec) + L-serine + ATP = L-seryl-tRNA(Sec) + AMP + diphosphate + H(+)</text>
        <dbReference type="Rhea" id="RHEA:42580"/>
        <dbReference type="Rhea" id="RHEA-COMP:9742"/>
        <dbReference type="Rhea" id="RHEA-COMP:10128"/>
        <dbReference type="ChEBI" id="CHEBI:15378"/>
        <dbReference type="ChEBI" id="CHEBI:30616"/>
        <dbReference type="ChEBI" id="CHEBI:33019"/>
        <dbReference type="ChEBI" id="CHEBI:33384"/>
        <dbReference type="ChEBI" id="CHEBI:78442"/>
        <dbReference type="ChEBI" id="CHEBI:78533"/>
        <dbReference type="ChEBI" id="CHEBI:456215"/>
        <dbReference type="EC" id="6.1.1.11"/>
    </reaction>
</comment>
<comment type="pathway">
    <text evidence="1">Aminoacyl-tRNA biosynthesis; selenocysteinyl-tRNA(Sec) biosynthesis; L-seryl-tRNA(Sec) from L-serine and tRNA(Sec): step 1/1.</text>
</comment>
<comment type="subunit">
    <text evidence="1">Homodimer. The tRNA molecule binds across the dimer.</text>
</comment>
<comment type="subcellular location">
    <subcellularLocation>
        <location evidence="1">Cytoplasm</location>
    </subcellularLocation>
</comment>
<comment type="domain">
    <text evidence="1">Consists of two distinct domains, a catalytic core and a N-terminal extension that is involved in tRNA binding.</text>
</comment>
<comment type="similarity">
    <text evidence="1">Belongs to the class-II aminoacyl-tRNA synthetase family. Type-1 seryl-tRNA synthetase subfamily.</text>
</comment>
<dbReference type="EC" id="6.1.1.11" evidence="1"/>
<dbReference type="EMBL" id="CP000241">
    <property type="protein sequence ID" value="ABF85500.1"/>
    <property type="molecule type" value="Genomic_DNA"/>
</dbReference>
<dbReference type="RefSeq" id="WP_000567134.1">
    <property type="nucleotide sequence ID" value="NC_008086.1"/>
</dbReference>
<dbReference type="SMR" id="Q1CRC2"/>
<dbReference type="KEGG" id="hpa:HPAG1_1433"/>
<dbReference type="HOGENOM" id="CLU_023797_1_1_7"/>
<dbReference type="UniPathway" id="UPA00906">
    <property type="reaction ID" value="UER00895"/>
</dbReference>
<dbReference type="GO" id="GO:0005737">
    <property type="term" value="C:cytoplasm"/>
    <property type="evidence" value="ECO:0007669"/>
    <property type="project" value="UniProtKB-SubCell"/>
</dbReference>
<dbReference type="GO" id="GO:0005524">
    <property type="term" value="F:ATP binding"/>
    <property type="evidence" value="ECO:0007669"/>
    <property type="project" value="UniProtKB-UniRule"/>
</dbReference>
<dbReference type="GO" id="GO:0004828">
    <property type="term" value="F:serine-tRNA ligase activity"/>
    <property type="evidence" value="ECO:0007669"/>
    <property type="project" value="UniProtKB-UniRule"/>
</dbReference>
<dbReference type="GO" id="GO:0016260">
    <property type="term" value="P:selenocysteine biosynthetic process"/>
    <property type="evidence" value="ECO:0007669"/>
    <property type="project" value="UniProtKB-UniRule"/>
</dbReference>
<dbReference type="GO" id="GO:0006434">
    <property type="term" value="P:seryl-tRNA aminoacylation"/>
    <property type="evidence" value="ECO:0007669"/>
    <property type="project" value="UniProtKB-UniRule"/>
</dbReference>
<dbReference type="CDD" id="cd00770">
    <property type="entry name" value="SerRS_core"/>
    <property type="match status" value="1"/>
</dbReference>
<dbReference type="Gene3D" id="3.30.930.10">
    <property type="entry name" value="Bira Bifunctional Protein, Domain 2"/>
    <property type="match status" value="1"/>
</dbReference>
<dbReference type="Gene3D" id="1.10.287.40">
    <property type="entry name" value="Serine-tRNA synthetase, tRNA binding domain"/>
    <property type="match status" value="1"/>
</dbReference>
<dbReference type="HAMAP" id="MF_00176">
    <property type="entry name" value="Ser_tRNA_synth_type1"/>
    <property type="match status" value="1"/>
</dbReference>
<dbReference type="InterPro" id="IPR002314">
    <property type="entry name" value="aa-tRNA-synt_IIb"/>
</dbReference>
<dbReference type="InterPro" id="IPR006195">
    <property type="entry name" value="aa-tRNA-synth_II"/>
</dbReference>
<dbReference type="InterPro" id="IPR045864">
    <property type="entry name" value="aa-tRNA-synth_II/BPL/LPL"/>
</dbReference>
<dbReference type="InterPro" id="IPR002317">
    <property type="entry name" value="Ser-tRNA-ligase_type_1"/>
</dbReference>
<dbReference type="InterPro" id="IPR015866">
    <property type="entry name" value="Ser-tRNA-synth_1_N"/>
</dbReference>
<dbReference type="InterPro" id="IPR042103">
    <property type="entry name" value="SerRS_1_N_sf"/>
</dbReference>
<dbReference type="InterPro" id="IPR033729">
    <property type="entry name" value="SerRS_core"/>
</dbReference>
<dbReference type="InterPro" id="IPR010978">
    <property type="entry name" value="tRNA-bd_arm"/>
</dbReference>
<dbReference type="NCBIfam" id="TIGR00414">
    <property type="entry name" value="serS"/>
    <property type="match status" value="1"/>
</dbReference>
<dbReference type="PANTHER" id="PTHR43697:SF1">
    <property type="entry name" value="SERINE--TRNA LIGASE"/>
    <property type="match status" value="1"/>
</dbReference>
<dbReference type="PANTHER" id="PTHR43697">
    <property type="entry name" value="SERYL-TRNA SYNTHETASE"/>
    <property type="match status" value="1"/>
</dbReference>
<dbReference type="Pfam" id="PF02403">
    <property type="entry name" value="Seryl_tRNA_N"/>
    <property type="match status" value="1"/>
</dbReference>
<dbReference type="Pfam" id="PF00587">
    <property type="entry name" value="tRNA-synt_2b"/>
    <property type="match status" value="1"/>
</dbReference>
<dbReference type="PIRSF" id="PIRSF001529">
    <property type="entry name" value="Ser-tRNA-synth_IIa"/>
    <property type="match status" value="1"/>
</dbReference>
<dbReference type="PRINTS" id="PR00981">
    <property type="entry name" value="TRNASYNTHSER"/>
</dbReference>
<dbReference type="SUPFAM" id="SSF55681">
    <property type="entry name" value="Class II aaRS and biotin synthetases"/>
    <property type="match status" value="1"/>
</dbReference>
<dbReference type="SUPFAM" id="SSF46589">
    <property type="entry name" value="tRNA-binding arm"/>
    <property type="match status" value="1"/>
</dbReference>
<dbReference type="PROSITE" id="PS50862">
    <property type="entry name" value="AA_TRNA_LIGASE_II"/>
    <property type="match status" value="1"/>
</dbReference>
<name>SYS_HELPH</name>
<accession>Q1CRC2</accession>
<proteinExistence type="inferred from homology"/>